<organism>
    <name type="scientific">Rattus norvegicus</name>
    <name type="common">Rat</name>
    <dbReference type="NCBI Taxonomy" id="10116"/>
    <lineage>
        <taxon>Eukaryota</taxon>
        <taxon>Metazoa</taxon>
        <taxon>Chordata</taxon>
        <taxon>Craniata</taxon>
        <taxon>Vertebrata</taxon>
        <taxon>Euteleostomi</taxon>
        <taxon>Mammalia</taxon>
        <taxon>Eutheria</taxon>
        <taxon>Euarchontoglires</taxon>
        <taxon>Glires</taxon>
        <taxon>Rodentia</taxon>
        <taxon>Myomorpha</taxon>
        <taxon>Muroidea</taxon>
        <taxon>Muridae</taxon>
        <taxon>Murinae</taxon>
        <taxon>Rattus</taxon>
    </lineage>
</organism>
<sequence length="115" mass="13087">MNLLIIITINITLSFILISIAFWLPQMNLYSEKANPYECGFDPTSSARLPFSMKFFLVAITFLLFDLEIALLLPLPWAIQTTNTTTMMATAFILVTILALGLSYEWTQKGLEWTE</sequence>
<name>NU3M_RAT</name>
<keyword id="KW-0249">Electron transport</keyword>
<keyword id="KW-0472">Membrane</keyword>
<keyword id="KW-0496">Mitochondrion</keyword>
<keyword id="KW-0999">Mitochondrion inner membrane</keyword>
<keyword id="KW-0520">NAD</keyword>
<keyword id="KW-1185">Reference proteome</keyword>
<keyword id="KW-0679">Respiratory chain</keyword>
<keyword id="KW-1278">Translocase</keyword>
<keyword id="KW-0812">Transmembrane</keyword>
<keyword id="KW-1133">Transmembrane helix</keyword>
<keyword id="KW-0813">Transport</keyword>
<keyword id="KW-0830">Ubiquinone</keyword>
<proteinExistence type="inferred from homology"/>
<evidence type="ECO:0000250" key="1">
    <source>
        <dbReference type="UniProtKB" id="P03897"/>
    </source>
</evidence>
<evidence type="ECO:0000250" key="2">
    <source>
        <dbReference type="UniProtKB" id="P03898"/>
    </source>
</evidence>
<evidence type="ECO:0000255" key="3"/>
<evidence type="ECO:0000305" key="4"/>
<evidence type="ECO:0000312" key="5">
    <source>
        <dbReference type="RGD" id="620557"/>
    </source>
</evidence>
<dbReference type="EC" id="7.1.1.2" evidence="1"/>
<dbReference type="EMBL" id="J01435">
    <property type="protein sequence ID" value="AAD15021.1"/>
    <property type="molecule type" value="Genomic_DNA"/>
</dbReference>
<dbReference type="EMBL" id="X14848">
    <property type="protein sequence ID" value="CAA32961.1"/>
    <property type="molecule type" value="Genomic_DNA"/>
</dbReference>
<dbReference type="EMBL" id="AY172581">
    <property type="protein sequence ID" value="AAN77601.1"/>
    <property type="molecule type" value="Genomic_DNA"/>
</dbReference>
<dbReference type="PIR" id="S04754">
    <property type="entry name" value="S04754"/>
</dbReference>
<dbReference type="RefSeq" id="AP_004899.1">
    <property type="nucleotide sequence ID" value="AC_000022.2"/>
</dbReference>
<dbReference type="RefSeq" id="YP_665636.1">
    <property type="nucleotide sequence ID" value="NC_001665.2"/>
</dbReference>
<dbReference type="SMR" id="P05506"/>
<dbReference type="FunCoup" id="P05506">
    <property type="interactions" value="57"/>
</dbReference>
<dbReference type="STRING" id="10116.ENSRNOP00000039725"/>
<dbReference type="CarbonylDB" id="P05506"/>
<dbReference type="PhosphoSitePlus" id="P05506"/>
<dbReference type="PaxDb" id="10116-ENSRNOP00000039725"/>
<dbReference type="Ensembl" id="ENSRNOT00000041241.3">
    <property type="protein sequence ID" value="ENSRNOP00000039725.4"/>
    <property type="gene ID" value="ENSRNOG00000033615.3"/>
</dbReference>
<dbReference type="GeneID" id="26199"/>
<dbReference type="KEGG" id="rno:26199"/>
<dbReference type="AGR" id="RGD:620557"/>
<dbReference type="CTD" id="4537"/>
<dbReference type="RGD" id="620557">
    <property type="gene designation" value="Mt-nd3"/>
</dbReference>
<dbReference type="eggNOG" id="KOG4662">
    <property type="taxonomic scope" value="Eukaryota"/>
</dbReference>
<dbReference type="GeneTree" id="ENSGT00390000011605"/>
<dbReference type="HOGENOM" id="CLU_119549_3_1_1"/>
<dbReference type="InParanoid" id="P05506"/>
<dbReference type="OMA" id="GPRRYNR"/>
<dbReference type="OrthoDB" id="91051at9989"/>
<dbReference type="Reactome" id="R-RNO-611105">
    <property type="pathway name" value="Respiratory electron transport"/>
</dbReference>
<dbReference type="Reactome" id="R-RNO-6799198">
    <property type="pathway name" value="Complex I biogenesis"/>
</dbReference>
<dbReference type="PRO" id="PR:P05506"/>
<dbReference type="Proteomes" id="UP000002494">
    <property type="component" value="Mitochondrion"/>
</dbReference>
<dbReference type="Bgee" id="ENSRNOG00000033615">
    <property type="expression patterns" value="Expressed in cerebellum and 19 other cell types or tissues"/>
</dbReference>
<dbReference type="ExpressionAtlas" id="P05506">
    <property type="expression patterns" value="baseline and differential"/>
</dbReference>
<dbReference type="GO" id="GO:0005743">
    <property type="term" value="C:mitochondrial inner membrane"/>
    <property type="evidence" value="ECO:0000250"/>
    <property type="project" value="UniProtKB"/>
</dbReference>
<dbReference type="GO" id="GO:0045271">
    <property type="term" value="C:respiratory chain complex I"/>
    <property type="evidence" value="ECO:0000266"/>
    <property type="project" value="RGD"/>
</dbReference>
<dbReference type="GO" id="GO:0008137">
    <property type="term" value="F:NADH dehydrogenase (ubiquinone) activity"/>
    <property type="evidence" value="ECO:0000250"/>
    <property type="project" value="UniProtKB"/>
</dbReference>
<dbReference type="GO" id="GO:0071385">
    <property type="term" value="P:cellular response to glucocorticoid stimulus"/>
    <property type="evidence" value="ECO:0000314"/>
    <property type="project" value="RGD"/>
</dbReference>
<dbReference type="GO" id="GO:0006120">
    <property type="term" value="P:mitochondrial electron transport, NADH to ubiquinone"/>
    <property type="evidence" value="ECO:0000250"/>
    <property type="project" value="UniProtKB"/>
</dbReference>
<dbReference type="GO" id="GO:0009725">
    <property type="term" value="P:response to hormone"/>
    <property type="evidence" value="ECO:0000315"/>
    <property type="project" value="RGD"/>
</dbReference>
<dbReference type="GO" id="GO:0009642">
    <property type="term" value="P:response to light intensity"/>
    <property type="evidence" value="ECO:0000270"/>
    <property type="project" value="RGD"/>
</dbReference>
<dbReference type="GO" id="GO:0006979">
    <property type="term" value="P:response to oxidative stress"/>
    <property type="evidence" value="ECO:0000314"/>
    <property type="project" value="RGD"/>
</dbReference>
<dbReference type="FunFam" id="1.20.58.1610:FF:000004">
    <property type="entry name" value="NADH-quinone oxidoreductase subunit A"/>
    <property type="match status" value="1"/>
</dbReference>
<dbReference type="Gene3D" id="1.20.58.1610">
    <property type="entry name" value="NADH:ubiquinone/plastoquinone oxidoreductase, chain 3"/>
    <property type="match status" value="1"/>
</dbReference>
<dbReference type="InterPro" id="IPR000440">
    <property type="entry name" value="NADH_UbQ/plastoQ_OxRdtase_su3"/>
</dbReference>
<dbReference type="InterPro" id="IPR038430">
    <property type="entry name" value="NDAH_ubi_oxred_su3_sf"/>
</dbReference>
<dbReference type="PANTHER" id="PTHR11058">
    <property type="entry name" value="NADH-UBIQUINONE OXIDOREDUCTASE CHAIN 3"/>
    <property type="match status" value="1"/>
</dbReference>
<dbReference type="PANTHER" id="PTHR11058:SF9">
    <property type="entry name" value="NADH-UBIQUINONE OXIDOREDUCTASE CHAIN 3"/>
    <property type="match status" value="1"/>
</dbReference>
<dbReference type="Pfam" id="PF00507">
    <property type="entry name" value="Oxidored_q4"/>
    <property type="match status" value="1"/>
</dbReference>
<feature type="chain" id="PRO_0000117818" description="NADH-ubiquinone oxidoreductase chain 3">
    <location>
        <begin position="1"/>
        <end position="115"/>
    </location>
</feature>
<feature type="transmembrane region" description="Helical" evidence="3">
    <location>
        <begin position="3"/>
        <end position="23"/>
    </location>
</feature>
<feature type="transmembrane region" description="Helical" evidence="3">
    <location>
        <begin position="55"/>
        <end position="75"/>
    </location>
</feature>
<feature type="transmembrane region" description="Helical" evidence="3">
    <location>
        <begin position="86"/>
        <end position="106"/>
    </location>
</feature>
<feature type="sequence conflict" description="In Ref. 2; CAA32961 and 1; AAD15021." evidence="4" ref="2 1">
    <original>L</original>
    <variation>P</variation>
    <location>
        <position position="4"/>
    </location>
</feature>
<feature type="sequence conflict" description="In Ref. 1; AAD15021." evidence="4" ref="1">
    <original>T</original>
    <variation>A</variation>
    <location>
        <position position="85"/>
    </location>
</feature>
<feature type="sequence conflict" description="In Ref. 2; CAA32961." evidence="4" ref="2">
    <original>A</original>
    <variation>S</variation>
    <location>
        <position position="99"/>
    </location>
</feature>
<feature type="sequence conflict" description="In Ref. 2; CAA32961." evidence="4" ref="2">
    <original>S</original>
    <variation>A</variation>
    <location>
        <position position="103"/>
    </location>
</feature>
<protein>
    <recommendedName>
        <fullName evidence="4">NADH-ubiquinone oxidoreductase chain 3</fullName>
        <ecNumber evidence="1">7.1.1.2</ecNumber>
    </recommendedName>
    <alternativeName>
        <fullName>NADH dehydrogenase subunit 3</fullName>
    </alternativeName>
</protein>
<comment type="function">
    <text evidence="1">Core subunit of the mitochondrial membrane respiratory chain NADH dehydrogenase (Complex I) which catalyzes electron transfer from NADH through the respiratory chain, using ubiquinone as an electron acceptor. Essential for the catalytic activity of complex I.</text>
</comment>
<comment type="catalytic activity">
    <reaction evidence="1">
        <text>a ubiquinone + NADH + 5 H(+)(in) = a ubiquinol + NAD(+) + 4 H(+)(out)</text>
        <dbReference type="Rhea" id="RHEA:29091"/>
        <dbReference type="Rhea" id="RHEA-COMP:9565"/>
        <dbReference type="Rhea" id="RHEA-COMP:9566"/>
        <dbReference type="ChEBI" id="CHEBI:15378"/>
        <dbReference type="ChEBI" id="CHEBI:16389"/>
        <dbReference type="ChEBI" id="CHEBI:17976"/>
        <dbReference type="ChEBI" id="CHEBI:57540"/>
        <dbReference type="ChEBI" id="CHEBI:57945"/>
        <dbReference type="EC" id="7.1.1.2"/>
    </reaction>
</comment>
<comment type="subunit">
    <text evidence="1">Core subunit of respiratory chain NADH dehydrogenase (Complex I) which is composed of 45 different subunits. Interacts with TMEM186. Interacts with TMEM242 (By similarity).</text>
</comment>
<comment type="subcellular location">
    <subcellularLocation>
        <location evidence="2">Mitochondrion inner membrane</location>
        <topology evidence="3">Multi-pass membrane protein</topology>
    </subcellularLocation>
</comment>
<comment type="similarity">
    <text evidence="4">Belongs to the complex I subunit 3 family.</text>
</comment>
<reference key="1">
    <citation type="journal article" date="1981" name="Curr. Genet.">
        <title>Analysis of a DNA segment from rat liver mitochondria containing the genes for the cytochrome oxidase subunits I, II and III, ATPase subunit 6, and several tRNA genes.</title>
        <authorList>
            <person name="Grosskopf R."/>
            <person name="Feldmann H."/>
        </authorList>
    </citation>
    <scope>NUCLEOTIDE SEQUENCE [GENOMIC DNA]</scope>
    <source>
        <strain>Sprague-Dawley</strain>
    </source>
</reference>
<reference key="2">
    <citation type="journal article" date="1989" name="J. Mol. Evol.">
        <title>The complete nucleotide sequence of the Rattus norvegicus mitochondrial genome: cryptic signals revealed by comparative analysis between vertebrates.</title>
        <authorList>
            <person name="Gadaleta G."/>
            <person name="Pepe G."/>
            <person name="de Candia G."/>
            <person name="Quagliariello C."/>
            <person name="Sbisa E."/>
            <person name="Saccone C."/>
        </authorList>
    </citation>
    <scope>NUCLEOTIDE SEQUENCE [GENOMIC DNA]</scope>
    <source>
        <strain>Wistar</strain>
    </source>
</reference>
<reference key="3">
    <citation type="journal article" date="2004" name="Nature">
        <title>Genome sequence of the Brown Norway rat yields insights into mammalian evolution.</title>
        <authorList>
            <person name="Gibbs R.A."/>
            <person name="Weinstock G.M."/>
            <person name="Metzker M.L."/>
            <person name="Muzny D.M."/>
            <person name="Sodergren E.J."/>
            <person name="Scherer S."/>
            <person name="Scott G."/>
            <person name="Steffen D."/>
            <person name="Worley K.C."/>
            <person name="Burch P.E."/>
            <person name="Okwuonu G."/>
            <person name="Hines S."/>
            <person name="Lewis L."/>
            <person name="Deramo C."/>
            <person name="Delgado O."/>
            <person name="Dugan-Rocha S."/>
            <person name="Miner G."/>
            <person name="Morgan M."/>
            <person name="Hawes A."/>
            <person name="Gill R."/>
            <person name="Holt R.A."/>
            <person name="Adams M.D."/>
            <person name="Amanatides P.G."/>
            <person name="Baden-Tillson H."/>
            <person name="Barnstead M."/>
            <person name="Chin S."/>
            <person name="Evans C.A."/>
            <person name="Ferriera S."/>
            <person name="Fosler C."/>
            <person name="Glodek A."/>
            <person name="Gu Z."/>
            <person name="Jennings D."/>
            <person name="Kraft C.L."/>
            <person name="Nguyen T."/>
            <person name="Pfannkoch C.M."/>
            <person name="Sitter C."/>
            <person name="Sutton G.G."/>
            <person name="Venter J.C."/>
            <person name="Woodage T."/>
            <person name="Smith D."/>
            <person name="Lee H.-M."/>
            <person name="Gustafson E."/>
            <person name="Cahill P."/>
            <person name="Kana A."/>
            <person name="Doucette-Stamm L."/>
            <person name="Weinstock K."/>
            <person name="Fechtel K."/>
            <person name="Weiss R.B."/>
            <person name="Dunn D.M."/>
            <person name="Green E.D."/>
            <person name="Blakesley R.W."/>
            <person name="Bouffard G.G."/>
            <person name="De Jong P.J."/>
            <person name="Osoegawa K."/>
            <person name="Zhu B."/>
            <person name="Marra M."/>
            <person name="Schein J."/>
            <person name="Bosdet I."/>
            <person name="Fjell C."/>
            <person name="Jones S."/>
            <person name="Krzywinski M."/>
            <person name="Mathewson C."/>
            <person name="Siddiqui A."/>
            <person name="Wye N."/>
            <person name="McPherson J."/>
            <person name="Zhao S."/>
            <person name="Fraser C.M."/>
            <person name="Shetty J."/>
            <person name="Shatsman S."/>
            <person name="Geer K."/>
            <person name="Chen Y."/>
            <person name="Abramzon S."/>
            <person name="Nierman W.C."/>
            <person name="Havlak P.H."/>
            <person name="Chen R."/>
            <person name="Durbin K.J."/>
            <person name="Egan A."/>
            <person name="Ren Y."/>
            <person name="Song X.-Z."/>
            <person name="Li B."/>
            <person name="Liu Y."/>
            <person name="Qin X."/>
            <person name="Cawley S."/>
            <person name="Cooney A.J."/>
            <person name="D'Souza L.M."/>
            <person name="Martin K."/>
            <person name="Wu J.Q."/>
            <person name="Gonzalez-Garay M.L."/>
            <person name="Jackson A.R."/>
            <person name="Kalafus K.J."/>
            <person name="McLeod M.P."/>
            <person name="Milosavljevic A."/>
            <person name="Virk D."/>
            <person name="Volkov A."/>
            <person name="Wheeler D.A."/>
            <person name="Zhang Z."/>
            <person name="Bailey J.A."/>
            <person name="Eichler E.E."/>
            <person name="Tuzun E."/>
            <person name="Birney E."/>
            <person name="Mongin E."/>
            <person name="Ureta-Vidal A."/>
            <person name="Woodwark C."/>
            <person name="Zdobnov E."/>
            <person name="Bork P."/>
            <person name="Suyama M."/>
            <person name="Torrents D."/>
            <person name="Alexandersson M."/>
            <person name="Trask B.J."/>
            <person name="Young J.M."/>
            <person name="Huang H."/>
            <person name="Wang H."/>
            <person name="Xing H."/>
            <person name="Daniels S."/>
            <person name="Gietzen D."/>
            <person name="Schmidt J."/>
            <person name="Stevens K."/>
            <person name="Vitt U."/>
            <person name="Wingrove J."/>
            <person name="Camara F."/>
            <person name="Mar Alba M."/>
            <person name="Abril J.F."/>
            <person name="Guigo R."/>
            <person name="Smit A."/>
            <person name="Dubchak I."/>
            <person name="Rubin E.M."/>
            <person name="Couronne O."/>
            <person name="Poliakov A."/>
            <person name="Huebner N."/>
            <person name="Ganten D."/>
            <person name="Goesele C."/>
            <person name="Hummel O."/>
            <person name="Kreitler T."/>
            <person name="Lee Y.-A."/>
            <person name="Monti J."/>
            <person name="Schulz H."/>
            <person name="Zimdahl H."/>
            <person name="Himmelbauer H."/>
            <person name="Lehrach H."/>
            <person name="Jacob H.J."/>
            <person name="Bromberg S."/>
            <person name="Gullings-Handley J."/>
            <person name="Jensen-Seaman M.I."/>
            <person name="Kwitek A.E."/>
            <person name="Lazar J."/>
            <person name="Pasko D."/>
            <person name="Tonellato P.J."/>
            <person name="Twigger S."/>
            <person name="Ponting C.P."/>
            <person name="Duarte J.M."/>
            <person name="Rice S."/>
            <person name="Goodstadt L."/>
            <person name="Beatson S.A."/>
            <person name="Emes R.D."/>
            <person name="Winter E.E."/>
            <person name="Webber C."/>
            <person name="Brandt P."/>
            <person name="Nyakatura G."/>
            <person name="Adetobi M."/>
            <person name="Chiaromonte F."/>
            <person name="Elnitski L."/>
            <person name="Eswara P."/>
            <person name="Hardison R.C."/>
            <person name="Hou M."/>
            <person name="Kolbe D."/>
            <person name="Makova K."/>
            <person name="Miller W."/>
            <person name="Nekrutenko A."/>
            <person name="Riemer C."/>
            <person name="Schwartz S."/>
            <person name="Taylor J."/>
            <person name="Yang S."/>
            <person name="Zhang Y."/>
            <person name="Lindpaintner K."/>
            <person name="Andrews T.D."/>
            <person name="Caccamo M."/>
            <person name="Clamp M."/>
            <person name="Clarke L."/>
            <person name="Curwen V."/>
            <person name="Durbin R.M."/>
            <person name="Eyras E."/>
            <person name="Searle S.M."/>
            <person name="Cooper G.M."/>
            <person name="Batzoglou S."/>
            <person name="Brudno M."/>
            <person name="Sidow A."/>
            <person name="Stone E.A."/>
            <person name="Payseur B.A."/>
            <person name="Bourque G."/>
            <person name="Lopez-Otin C."/>
            <person name="Puente X.S."/>
            <person name="Chakrabarti K."/>
            <person name="Chatterji S."/>
            <person name="Dewey C."/>
            <person name="Pachter L."/>
            <person name="Bray N."/>
            <person name="Yap V.B."/>
            <person name="Caspi A."/>
            <person name="Tesler G."/>
            <person name="Pevzner P.A."/>
            <person name="Haussler D."/>
            <person name="Roskin K.M."/>
            <person name="Baertsch R."/>
            <person name="Clawson H."/>
            <person name="Furey T.S."/>
            <person name="Hinrichs A.S."/>
            <person name="Karolchik D."/>
            <person name="Kent W.J."/>
            <person name="Rosenbloom K.R."/>
            <person name="Trumbower H."/>
            <person name="Weirauch M."/>
            <person name="Cooper D.N."/>
            <person name="Stenson P.D."/>
            <person name="Ma B."/>
            <person name="Brent M."/>
            <person name="Arumugam M."/>
            <person name="Shteynberg D."/>
            <person name="Copley R.R."/>
            <person name="Taylor M.S."/>
            <person name="Riethman H."/>
            <person name="Mudunuri U."/>
            <person name="Peterson J."/>
            <person name="Guyer M."/>
            <person name="Felsenfeld A."/>
            <person name="Old S."/>
            <person name="Mockrin S."/>
            <person name="Collins F.S."/>
        </authorList>
    </citation>
    <scope>NUCLEOTIDE SEQUENCE [LARGE SCALE GENOMIC DNA]</scope>
    <source>
        <strain>Brown Norway</strain>
    </source>
</reference>
<geneLocation type="mitochondrion"/>
<accession>P05506</accession>
<gene>
    <name evidence="5" type="primary">Mt-nd3</name>
    <name type="synonym">Nd3</name>
</gene>